<keyword id="KW-0963">Cytoplasm</keyword>
<keyword id="KW-0235">DNA replication</keyword>
<keyword id="KW-0239">DNA-directed DNA polymerase</keyword>
<keyword id="KW-0269">Exonuclease</keyword>
<keyword id="KW-0378">Hydrolase</keyword>
<keyword id="KW-0540">Nuclease</keyword>
<keyword id="KW-0548">Nucleotidyltransferase</keyword>
<keyword id="KW-0808">Transferase</keyword>
<organism>
    <name type="scientific">Streptococcus thermophilus (strain ATCC BAA-491 / LMD-9)</name>
    <dbReference type="NCBI Taxonomy" id="322159"/>
    <lineage>
        <taxon>Bacteria</taxon>
        <taxon>Bacillati</taxon>
        <taxon>Bacillota</taxon>
        <taxon>Bacilli</taxon>
        <taxon>Lactobacillales</taxon>
        <taxon>Streptococcaceae</taxon>
        <taxon>Streptococcus</taxon>
    </lineage>
</organism>
<reference key="1">
    <citation type="journal article" date="2006" name="Proc. Natl. Acad. Sci. U.S.A.">
        <title>Comparative genomics of the lactic acid bacteria.</title>
        <authorList>
            <person name="Makarova K.S."/>
            <person name="Slesarev A."/>
            <person name="Wolf Y.I."/>
            <person name="Sorokin A."/>
            <person name="Mirkin B."/>
            <person name="Koonin E.V."/>
            <person name="Pavlov A."/>
            <person name="Pavlova N."/>
            <person name="Karamychev V."/>
            <person name="Polouchine N."/>
            <person name="Shakhova V."/>
            <person name="Grigoriev I."/>
            <person name="Lou Y."/>
            <person name="Rohksar D."/>
            <person name="Lucas S."/>
            <person name="Huang K."/>
            <person name="Goodstein D.M."/>
            <person name="Hawkins T."/>
            <person name="Plengvidhya V."/>
            <person name="Welker D."/>
            <person name="Hughes J."/>
            <person name="Goh Y."/>
            <person name="Benson A."/>
            <person name="Baldwin K."/>
            <person name="Lee J.-H."/>
            <person name="Diaz-Muniz I."/>
            <person name="Dosti B."/>
            <person name="Smeianov V."/>
            <person name="Wechter W."/>
            <person name="Barabote R."/>
            <person name="Lorca G."/>
            <person name="Altermann E."/>
            <person name="Barrangou R."/>
            <person name="Ganesan B."/>
            <person name="Xie Y."/>
            <person name="Rawsthorne H."/>
            <person name="Tamir D."/>
            <person name="Parker C."/>
            <person name="Breidt F."/>
            <person name="Broadbent J.R."/>
            <person name="Hutkins R."/>
            <person name="O'Sullivan D."/>
            <person name="Steele J."/>
            <person name="Unlu G."/>
            <person name="Saier M.H. Jr."/>
            <person name="Klaenhammer T."/>
            <person name="Richardson P."/>
            <person name="Kozyavkin S."/>
            <person name="Weimer B.C."/>
            <person name="Mills D.A."/>
        </authorList>
    </citation>
    <scope>NUCLEOTIDE SEQUENCE [LARGE SCALE GENOMIC DNA]</scope>
    <source>
        <strain>ATCC BAA-491 / LMD-9</strain>
    </source>
</reference>
<protein>
    <recommendedName>
        <fullName evidence="1">DNA polymerase III PolC-type</fullName>
        <shortName evidence="1">PolIII</shortName>
        <ecNumber evidence="1">2.7.7.7</ecNumber>
    </recommendedName>
</protein>
<gene>
    <name evidence="1" type="primary">polC</name>
    <name type="ordered locus">STER_0095</name>
</gene>
<name>DPO3_STRTD</name>
<evidence type="ECO:0000255" key="1">
    <source>
        <dbReference type="HAMAP-Rule" id="MF_00356"/>
    </source>
</evidence>
<proteinExistence type="inferred from homology"/>
<sequence length="1464" mass="164744">MSDKFKLLLKQIHFPQHEEAYNEIKSGSIESVKLFKSKRQWFFVFSFRNLLSYETFTLFDNLLHSSFDSLGAKVSYMINVEDISCDQSLLEAYFSYALDILKSSHFSIYSLFSNLGIEISNNSISVKAPAHILRENLHERFIALIADVLSNVGLSNVSISVLEDKEASSSLEEAYETNKISLQEEAESQARQALQSIVQSSPVPPPQKHQAQNFAEKQSQRVASFDKAEITPMIEVNSEENRIVFEGYIFDVEQRETKTGRIIINFKVTDYTSSFAMQRWVKDSEELVKFGMIKKGNWVRVRGRIENNPFTHSLTMNVQDIKEISHTPRKDLMPEGQKRVEFHAHTNMSTMDAIPTVEELIDTAAFWGHPAVAITDHANVQSFPHGYHKAKKAGIKAIFGLEANLVEDKVPIVYNSENLELKEATYVVFDVETTGLSAVHNDLIQIAASKMHKGNIVEQFDEFIDPGYPLSAFTTELTGITDNHVKGAKPLVQVLQEFQEFCKGAVLVAHNATFDVGFMNANYERHQLPTISQPVIDTLEFARNLYPEYKRHGLGPLTKRFGVALDHHHMANYDAEATGRLLFIFIKDVFEKHGLTNLEQLNTELVSDDSYKKSRVKHATLYVQNQTGLKNLFKLVSLSNVSYFEGVARIPRKVLDEYREGIIVGSACADGEVFDTLLSHGIDKAVEVAKYYDFIEVMPPAIYAPLIAKDLIKDEGAIEQLIKDLIEVANRLDKPVLATGNVHYINPEDAIYREIIVRALGQGAMINRPIGKGENAQPAPLPEAHFRTTNEMLDEFAFLGKDLAYEIVVANTQAMANQIEEVEVVKKDLYTPYIDRAEEQVAEMTYAKAFELYGNPLPDIIDLRIEKELSSILGNGFAVIYLASQMLVNRSNERGYLVGSRGSVGSSFVATMIGITEVNPMPPHYLCPKCQHSEFITDGSYGSGFDLPDKECSECGTEYKKDGQDIPFETFLGFDGDKVPDIDLNFSGDDQPSAHLDVRDIFGEQYAFRAGTVGTVADRTAYGFVKGYERDYNKFYRDAEVDRLAMGVAGVKRNTGQHPGGIVVIPNYMDVYDFTPVQYPADDVTAAWQTTHFNFHDIDENVLKLDILGHDDPTMIRKLQDLSGIDPKDIRADDPDVMKLFSGTEVLGVTPEQIGTSTGVLGIPEFGTNFVRGMVEETHPTTFAELLQLSGLSHGTDVWLGNAQDLIKEGIATLKTVIGCRDDIMVYLMHAGLDPKMAFTIMERVRKGMWLKISEEERNGYIQAMRENNVPDWYIESCGKIKYMFPKAHAAAYVMMALRVAYFKVHHPIYYYCAYFSIRAKAFELKTMSAGLDAVKARMEDIKEKRQRNEATNLENDLFTTLEIVNEMLERGFTFGQLDLYKSQATEFLIEGDTLIPPFIALEGLGENVAKQLVAAREEGEFLSKTELRKRGGLSSTLVERLDEMGILGNMPEDNQLSLFDDFF</sequence>
<dbReference type="EC" id="2.7.7.7" evidence="1"/>
<dbReference type="EMBL" id="CP000419">
    <property type="protein sequence ID" value="ABJ65449.1"/>
    <property type="molecule type" value="Genomic_DNA"/>
</dbReference>
<dbReference type="RefSeq" id="WP_011680607.1">
    <property type="nucleotide sequence ID" value="NC_008532.1"/>
</dbReference>
<dbReference type="SMR" id="Q03MX3"/>
<dbReference type="KEGG" id="ste:STER_0095"/>
<dbReference type="HOGENOM" id="CLU_003297_2_0_9"/>
<dbReference type="GO" id="GO:0005737">
    <property type="term" value="C:cytoplasm"/>
    <property type="evidence" value="ECO:0007669"/>
    <property type="project" value="UniProtKB-SubCell"/>
</dbReference>
<dbReference type="GO" id="GO:0008408">
    <property type="term" value="F:3'-5' exonuclease activity"/>
    <property type="evidence" value="ECO:0007669"/>
    <property type="project" value="UniProtKB-UniRule"/>
</dbReference>
<dbReference type="GO" id="GO:0003677">
    <property type="term" value="F:DNA binding"/>
    <property type="evidence" value="ECO:0007669"/>
    <property type="project" value="UniProtKB-UniRule"/>
</dbReference>
<dbReference type="GO" id="GO:0003887">
    <property type="term" value="F:DNA-directed DNA polymerase activity"/>
    <property type="evidence" value="ECO:0007669"/>
    <property type="project" value="UniProtKB-UniRule"/>
</dbReference>
<dbReference type="GO" id="GO:0006261">
    <property type="term" value="P:DNA-templated DNA replication"/>
    <property type="evidence" value="ECO:0007669"/>
    <property type="project" value="UniProtKB-UniRule"/>
</dbReference>
<dbReference type="CDD" id="cd06127">
    <property type="entry name" value="DEDDh"/>
    <property type="match status" value="1"/>
</dbReference>
<dbReference type="CDD" id="cd07435">
    <property type="entry name" value="PHP_PolIIIA_POLC"/>
    <property type="match status" value="1"/>
</dbReference>
<dbReference type="CDD" id="cd04484">
    <property type="entry name" value="polC_OBF"/>
    <property type="match status" value="1"/>
</dbReference>
<dbReference type="FunFam" id="3.30.420.10:FF:000045">
    <property type="entry name" value="3'-5' exonuclease DinG"/>
    <property type="match status" value="1"/>
</dbReference>
<dbReference type="Gene3D" id="1.10.150.870">
    <property type="match status" value="1"/>
</dbReference>
<dbReference type="Gene3D" id="3.30.1900.20">
    <property type="match status" value="1"/>
</dbReference>
<dbReference type="Gene3D" id="6.10.140.1510">
    <property type="match status" value="1"/>
</dbReference>
<dbReference type="Gene3D" id="3.20.20.140">
    <property type="entry name" value="Metal-dependent hydrolases"/>
    <property type="match status" value="2"/>
</dbReference>
<dbReference type="Gene3D" id="2.40.50.140">
    <property type="entry name" value="Nucleic acid-binding proteins"/>
    <property type="match status" value="1"/>
</dbReference>
<dbReference type="Gene3D" id="1.10.150.700">
    <property type="entry name" value="PolC, middle finger domain"/>
    <property type="match status" value="1"/>
</dbReference>
<dbReference type="Gene3D" id="3.30.420.10">
    <property type="entry name" value="Ribonuclease H-like superfamily/Ribonuclease H"/>
    <property type="match status" value="1"/>
</dbReference>
<dbReference type="HAMAP" id="MF_00356">
    <property type="entry name" value="DNApol_PolC"/>
    <property type="match status" value="1"/>
</dbReference>
<dbReference type="InterPro" id="IPR011708">
    <property type="entry name" value="DNA_pol3_alpha_NTPase_dom"/>
</dbReference>
<dbReference type="InterPro" id="IPR040982">
    <property type="entry name" value="DNA_pol3_finger"/>
</dbReference>
<dbReference type="InterPro" id="IPR024754">
    <property type="entry name" value="DNA_PolC-like_N_II"/>
</dbReference>
<dbReference type="InterPro" id="IPR028112">
    <property type="entry name" value="DNA_PolC-type_N_I"/>
</dbReference>
<dbReference type="InterPro" id="IPR004805">
    <property type="entry name" value="DnaE2/DnaE/PolC"/>
</dbReference>
<dbReference type="InterPro" id="IPR029460">
    <property type="entry name" value="DNAPol_HHH"/>
</dbReference>
<dbReference type="InterPro" id="IPR006054">
    <property type="entry name" value="DnaQ"/>
</dbReference>
<dbReference type="InterPro" id="IPR013520">
    <property type="entry name" value="Exonuclease_RNaseT/DNA_pol3"/>
</dbReference>
<dbReference type="InterPro" id="IPR012340">
    <property type="entry name" value="NA-bd_OB-fold"/>
</dbReference>
<dbReference type="InterPro" id="IPR004013">
    <property type="entry name" value="PHP_dom"/>
</dbReference>
<dbReference type="InterPro" id="IPR003141">
    <property type="entry name" value="Pol/His_phosphatase_N"/>
</dbReference>
<dbReference type="InterPro" id="IPR006308">
    <property type="entry name" value="Pol_III_a_PolC-type_gram_pos"/>
</dbReference>
<dbReference type="InterPro" id="IPR044923">
    <property type="entry name" value="PolC_middle_finger_sf"/>
</dbReference>
<dbReference type="InterPro" id="IPR012337">
    <property type="entry name" value="RNaseH-like_sf"/>
</dbReference>
<dbReference type="InterPro" id="IPR036397">
    <property type="entry name" value="RNaseH_sf"/>
</dbReference>
<dbReference type="NCBIfam" id="TIGR00573">
    <property type="entry name" value="dnaq"/>
    <property type="match status" value="1"/>
</dbReference>
<dbReference type="NCBIfam" id="TIGR01405">
    <property type="entry name" value="polC_Gram_pos"/>
    <property type="match status" value="1"/>
</dbReference>
<dbReference type="NCBIfam" id="NF001688">
    <property type="entry name" value="PRK00448.1"/>
    <property type="match status" value="1"/>
</dbReference>
<dbReference type="PANTHER" id="PTHR32294:SF5">
    <property type="entry name" value="DNA POLYMERASE III POLC-TYPE"/>
    <property type="match status" value="1"/>
</dbReference>
<dbReference type="PANTHER" id="PTHR32294">
    <property type="entry name" value="DNA POLYMERASE III SUBUNIT ALPHA"/>
    <property type="match status" value="1"/>
</dbReference>
<dbReference type="Pfam" id="PF14480">
    <property type="entry name" value="DNA_pol3_a_NI"/>
    <property type="match status" value="1"/>
</dbReference>
<dbReference type="Pfam" id="PF11490">
    <property type="entry name" value="DNA_pol3_a_NII"/>
    <property type="match status" value="1"/>
</dbReference>
<dbReference type="Pfam" id="PF07733">
    <property type="entry name" value="DNA_pol3_alpha"/>
    <property type="match status" value="1"/>
</dbReference>
<dbReference type="Pfam" id="PF17657">
    <property type="entry name" value="DNA_pol3_finger"/>
    <property type="match status" value="1"/>
</dbReference>
<dbReference type="Pfam" id="PF14579">
    <property type="entry name" value="HHH_6"/>
    <property type="match status" value="1"/>
</dbReference>
<dbReference type="Pfam" id="PF02811">
    <property type="entry name" value="PHP"/>
    <property type="match status" value="1"/>
</dbReference>
<dbReference type="Pfam" id="PF00929">
    <property type="entry name" value="RNase_T"/>
    <property type="match status" value="1"/>
</dbReference>
<dbReference type="SMART" id="SM00479">
    <property type="entry name" value="EXOIII"/>
    <property type="match status" value="1"/>
</dbReference>
<dbReference type="SMART" id="SM00481">
    <property type="entry name" value="POLIIIAc"/>
    <property type="match status" value="1"/>
</dbReference>
<dbReference type="SUPFAM" id="SSF50249">
    <property type="entry name" value="Nucleic acid-binding proteins"/>
    <property type="match status" value="1"/>
</dbReference>
<dbReference type="SUPFAM" id="SSF53098">
    <property type="entry name" value="Ribonuclease H-like"/>
    <property type="match status" value="1"/>
</dbReference>
<accession>Q03MX3</accession>
<feature type="chain" id="PRO_1000048495" description="DNA polymerase III PolC-type">
    <location>
        <begin position="1"/>
        <end position="1464"/>
    </location>
</feature>
<feature type="domain" description="Exonuclease">
    <location>
        <begin position="426"/>
        <end position="582"/>
    </location>
</feature>
<comment type="function">
    <text evidence="1">Required for replicative DNA synthesis. This DNA polymerase also exhibits 3' to 5' exonuclease activity.</text>
</comment>
<comment type="catalytic activity">
    <reaction evidence="1">
        <text>DNA(n) + a 2'-deoxyribonucleoside 5'-triphosphate = DNA(n+1) + diphosphate</text>
        <dbReference type="Rhea" id="RHEA:22508"/>
        <dbReference type="Rhea" id="RHEA-COMP:17339"/>
        <dbReference type="Rhea" id="RHEA-COMP:17340"/>
        <dbReference type="ChEBI" id="CHEBI:33019"/>
        <dbReference type="ChEBI" id="CHEBI:61560"/>
        <dbReference type="ChEBI" id="CHEBI:173112"/>
        <dbReference type="EC" id="2.7.7.7"/>
    </reaction>
</comment>
<comment type="subcellular location">
    <subcellularLocation>
        <location evidence="1">Cytoplasm</location>
    </subcellularLocation>
</comment>
<comment type="similarity">
    <text evidence="1">Belongs to the DNA polymerase type-C family. PolC subfamily.</text>
</comment>